<protein>
    <recommendedName>
        <fullName evidence="2">Small ribosomal subunit protein uS7cz/uS7cy</fullName>
    </recommendedName>
    <alternativeName>
        <fullName>30S ribosomal protein S7, chloroplastic</fullName>
    </alternativeName>
</protein>
<accession>A6MM82</accession>
<reference key="1">
    <citation type="journal article" date="2007" name="Mol. Phylogenet. Evol.">
        <title>Phylogenetic and evolutionary implications of complete chloroplast genome sequences of four early-diverging angiosperms: Buxus (Buxaceae), Chloranthus (Chloranthaceae), Dioscorea (Dioscoreaceae), and Illicium (Schisandraceae).</title>
        <authorList>
            <person name="Hansen D.R."/>
            <person name="Dastidar S.G."/>
            <person name="Cai Z."/>
            <person name="Penaflor C."/>
            <person name="Kuehl J.V."/>
            <person name="Boore J.L."/>
            <person name="Jansen R.K."/>
        </authorList>
    </citation>
    <scope>NUCLEOTIDE SEQUENCE [LARGE SCALE GENOMIC DNA]</scope>
</reference>
<sequence length="155" mass="17343">MSRRGTAEEKTAKSDPIYRNRLVNMLVNRILKHGKKSLAYQIIYRAVKKIQQKTETNPLSVLRQAIRGVTPDIAVKARRVGGSTHQVPIEIGSTQGKALAIRWLLGASRKRPGRNMAFKLSSELVDAAKGSGDAIRKKEETHRMAEANRAFAHFR</sequence>
<proteinExistence type="inferred from homology"/>
<feature type="chain" id="PRO_0000344327" description="Small ribosomal subunit protein uS7cz/uS7cy">
    <location>
        <begin position="1"/>
        <end position="155"/>
    </location>
</feature>
<gene>
    <name type="primary">rps7-A</name>
</gene>
<gene>
    <name type="primary">rps7-B</name>
</gene>
<organism>
    <name type="scientific">Buxus microphylla</name>
    <name type="common">Littleleaf boxwood</name>
    <name type="synonym">Japanese boxwood</name>
    <dbReference type="NCBI Taxonomy" id="153571"/>
    <lineage>
        <taxon>Eukaryota</taxon>
        <taxon>Viridiplantae</taxon>
        <taxon>Streptophyta</taxon>
        <taxon>Embryophyta</taxon>
        <taxon>Tracheophyta</taxon>
        <taxon>Spermatophyta</taxon>
        <taxon>Magnoliopsida</taxon>
        <taxon>Buxales</taxon>
        <taxon>Buxaceae</taxon>
        <taxon>Buxus</taxon>
    </lineage>
</organism>
<name>RR7_BUXMI</name>
<evidence type="ECO:0000250" key="1"/>
<evidence type="ECO:0000255" key="2">
    <source>
        <dbReference type="HAMAP-Rule" id="MF_00480"/>
    </source>
</evidence>
<evidence type="ECO:0000305" key="3"/>
<geneLocation type="chloroplast"/>
<comment type="function">
    <text evidence="1">One of the primary rRNA binding proteins, it binds directly to 16S rRNA where it nucleates assembly of the head domain of the 30S subunit.</text>
</comment>
<comment type="subunit">
    <text evidence="1">Part of the 30S ribosomal subunit.</text>
</comment>
<comment type="subcellular location">
    <subcellularLocation>
        <location>Plastid</location>
        <location>Chloroplast</location>
    </subcellularLocation>
</comment>
<comment type="similarity">
    <text evidence="3">Belongs to the universal ribosomal protein uS7 family.</text>
</comment>
<dbReference type="EMBL" id="EF380351">
    <property type="protein sequence ID" value="ABQ45294.1"/>
    <property type="molecule type" value="Genomic_DNA"/>
</dbReference>
<dbReference type="EMBL" id="EF380351">
    <property type="protein sequence ID" value="ABQ45310.1"/>
    <property type="molecule type" value="Genomic_DNA"/>
</dbReference>
<dbReference type="SMR" id="A6MM82"/>
<dbReference type="GO" id="GO:0009507">
    <property type="term" value="C:chloroplast"/>
    <property type="evidence" value="ECO:0007669"/>
    <property type="project" value="UniProtKB-SubCell"/>
</dbReference>
<dbReference type="GO" id="GO:0015935">
    <property type="term" value="C:small ribosomal subunit"/>
    <property type="evidence" value="ECO:0007669"/>
    <property type="project" value="InterPro"/>
</dbReference>
<dbReference type="GO" id="GO:0019843">
    <property type="term" value="F:rRNA binding"/>
    <property type="evidence" value="ECO:0007669"/>
    <property type="project" value="UniProtKB-UniRule"/>
</dbReference>
<dbReference type="GO" id="GO:0003735">
    <property type="term" value="F:structural constituent of ribosome"/>
    <property type="evidence" value="ECO:0007669"/>
    <property type="project" value="InterPro"/>
</dbReference>
<dbReference type="GO" id="GO:0006412">
    <property type="term" value="P:translation"/>
    <property type="evidence" value="ECO:0007669"/>
    <property type="project" value="UniProtKB-UniRule"/>
</dbReference>
<dbReference type="CDD" id="cd14871">
    <property type="entry name" value="uS7_Chloroplast"/>
    <property type="match status" value="1"/>
</dbReference>
<dbReference type="FunFam" id="1.10.455.10:FF:000001">
    <property type="entry name" value="30S ribosomal protein S7"/>
    <property type="match status" value="1"/>
</dbReference>
<dbReference type="Gene3D" id="1.10.455.10">
    <property type="entry name" value="Ribosomal protein S7 domain"/>
    <property type="match status" value="1"/>
</dbReference>
<dbReference type="HAMAP" id="MF_00480_B">
    <property type="entry name" value="Ribosomal_uS7_B"/>
    <property type="match status" value="1"/>
</dbReference>
<dbReference type="InterPro" id="IPR000235">
    <property type="entry name" value="Ribosomal_uS7"/>
</dbReference>
<dbReference type="InterPro" id="IPR005717">
    <property type="entry name" value="Ribosomal_uS7_bac/org-type"/>
</dbReference>
<dbReference type="InterPro" id="IPR020606">
    <property type="entry name" value="Ribosomal_uS7_CS"/>
</dbReference>
<dbReference type="InterPro" id="IPR023798">
    <property type="entry name" value="Ribosomal_uS7_dom"/>
</dbReference>
<dbReference type="InterPro" id="IPR036823">
    <property type="entry name" value="Ribosomal_uS7_dom_sf"/>
</dbReference>
<dbReference type="NCBIfam" id="TIGR01029">
    <property type="entry name" value="rpsG_bact"/>
    <property type="match status" value="1"/>
</dbReference>
<dbReference type="PANTHER" id="PTHR11205">
    <property type="entry name" value="RIBOSOMAL PROTEIN S7"/>
    <property type="match status" value="1"/>
</dbReference>
<dbReference type="Pfam" id="PF00177">
    <property type="entry name" value="Ribosomal_S7"/>
    <property type="match status" value="1"/>
</dbReference>
<dbReference type="PIRSF" id="PIRSF002122">
    <property type="entry name" value="RPS7p_RPS7a_RPS5e_RPS7o"/>
    <property type="match status" value="1"/>
</dbReference>
<dbReference type="SUPFAM" id="SSF47973">
    <property type="entry name" value="Ribosomal protein S7"/>
    <property type="match status" value="1"/>
</dbReference>
<dbReference type="PROSITE" id="PS00052">
    <property type="entry name" value="RIBOSOMAL_S7"/>
    <property type="match status" value="1"/>
</dbReference>
<keyword id="KW-0150">Chloroplast</keyword>
<keyword id="KW-0934">Plastid</keyword>
<keyword id="KW-0687">Ribonucleoprotein</keyword>
<keyword id="KW-0689">Ribosomal protein</keyword>
<keyword id="KW-0694">RNA-binding</keyword>
<keyword id="KW-0699">rRNA-binding</keyword>